<accession>P41457</accession>
<organismHost>
    <name type="scientific">Lepidoptera</name>
    <name type="common">butterflies and moths</name>
    <dbReference type="NCBI Taxonomy" id="7088"/>
</organismHost>
<organism>
    <name type="scientific">Autographa californica nuclear polyhedrosis virus</name>
    <name type="common">AcMNPV</name>
    <dbReference type="NCBI Taxonomy" id="46015"/>
    <lineage>
        <taxon>Viruses</taxon>
        <taxon>Viruses incertae sedis</taxon>
        <taxon>Naldaviricetes</taxon>
        <taxon>Lefavirales</taxon>
        <taxon>Baculoviridae</taxon>
        <taxon>Alphabaculovirus</taxon>
        <taxon>Alphabaculovirus aucalifornicae</taxon>
    </lineage>
</organism>
<gene>
    <name type="primary">AC53</name>
    <name type="ORF">ORF53</name>
</gene>
<evidence type="ECO:0000269" key="1">
    <source>
    </source>
</evidence>
<protein>
    <recommendedName>
        <fullName>Protein AC53</fullName>
    </recommendedName>
</protein>
<comment type="function">
    <text evidence="1">Plays a role in nucleocapsid assembly.</text>
</comment>
<comment type="subcellular location">
    <subcellularLocation>
        <location evidence="1">Host cytoplasm</location>
    </subcellularLocation>
    <subcellularLocation>
        <location evidence="1">Host nucleus</location>
    </subcellularLocation>
</comment>
<keyword id="KW-1035">Host cytoplasm</keyword>
<keyword id="KW-1048">Host nucleus</keyword>
<keyword id="KW-1185">Reference proteome</keyword>
<feature type="chain" id="PRO_0000132985" description="Protein AC53">
    <location>
        <begin position="1"/>
        <end position="139"/>
    </location>
</feature>
<reference key="1">
    <citation type="journal article" date="1994" name="Virology">
        <title>The complete DNA sequence of Autographa californica nuclear polyhedrosis virus.</title>
        <authorList>
            <person name="Ayres M.D."/>
            <person name="Howard S.C."/>
            <person name="Kuzio J."/>
            <person name="Lopez-Ferber M."/>
            <person name="Possee R.D."/>
        </authorList>
    </citation>
    <scope>NUCLEOTIDE SEQUENCE [LARGE SCALE GENOMIC DNA]</scope>
    <source>
        <strain>C6</strain>
    </source>
</reference>
<reference key="2">
    <citation type="journal article" date="2008" name="Virology">
        <title>Autographa californica multiple nucleopolyhedrovirus ac53 plays a role in nucleocapsid assembly.</title>
        <authorList>
            <person name="Liu C."/>
            <person name="Li Z."/>
            <person name="Wu W."/>
            <person name="Li L."/>
            <person name="Yuan M."/>
            <person name="Pan L."/>
            <person name="Yang K."/>
            <person name="Pang Y."/>
        </authorList>
    </citation>
    <scope>FUNCTION</scope>
    <scope>SUBCELLULAR LOCATION</scope>
</reference>
<sequence>MFCTFCLKDRNYYMFKLFKDYWPTCTTECQICLEKIDDNGGIVAMPDTGMLNLEKMFHEQCIQRWRREHTRDPFNRVIKYYFNFPPKTLEECNVMLRETKGSIGDHEIDRVYKRVYQRVTQEDALDIELDFRHFFKMQS</sequence>
<dbReference type="EMBL" id="L22858">
    <property type="protein sequence ID" value="AAA66683.1"/>
    <property type="molecule type" value="Genomic_DNA"/>
</dbReference>
<dbReference type="PIR" id="E72856">
    <property type="entry name" value="E72856"/>
</dbReference>
<dbReference type="KEGG" id="vg:1403885"/>
<dbReference type="OrthoDB" id="12505at10239"/>
<dbReference type="Proteomes" id="UP000008292">
    <property type="component" value="Segment"/>
</dbReference>
<dbReference type="GO" id="GO:0030430">
    <property type="term" value="C:host cell cytoplasm"/>
    <property type="evidence" value="ECO:0007669"/>
    <property type="project" value="UniProtKB-SubCell"/>
</dbReference>
<dbReference type="GO" id="GO:0042025">
    <property type="term" value="C:host cell nucleus"/>
    <property type="evidence" value="ECO:0007669"/>
    <property type="project" value="UniProtKB-SubCell"/>
</dbReference>
<dbReference type="Gene3D" id="3.30.40.10">
    <property type="entry name" value="Zinc/RING finger domain, C3HC4 (zinc finger)"/>
    <property type="match status" value="1"/>
</dbReference>
<dbReference type="InterPro" id="IPR008573">
    <property type="entry name" value="Baculovirus_U-box/Ring-like"/>
</dbReference>
<dbReference type="InterPro" id="IPR013083">
    <property type="entry name" value="Znf_RING/FYVE/PHD"/>
</dbReference>
<dbReference type="Pfam" id="PF05883">
    <property type="entry name" value="Baculo_RING"/>
    <property type="match status" value="1"/>
</dbReference>
<dbReference type="SUPFAM" id="SSF57850">
    <property type="entry name" value="RING/U-box"/>
    <property type="match status" value="1"/>
</dbReference>
<name>AC53_NPVAC</name>
<proteinExistence type="predicted"/>